<name>TRPD_ACIET</name>
<protein>
    <recommendedName>
        <fullName evidence="1">Anthranilate phosphoribosyltransferase</fullName>
        <ecNumber evidence="1">2.4.2.18</ecNumber>
    </recommendedName>
</protein>
<reference key="1">
    <citation type="submission" date="2009-01" db="EMBL/GenBank/DDBJ databases">
        <title>Complete sequence of Diaphorobacter sp. TPSY.</title>
        <authorList>
            <consortium name="US DOE Joint Genome Institute"/>
            <person name="Lucas S."/>
            <person name="Copeland A."/>
            <person name="Lapidus A."/>
            <person name="Glavina del Rio T."/>
            <person name="Tice H."/>
            <person name="Bruce D."/>
            <person name="Goodwin L."/>
            <person name="Pitluck S."/>
            <person name="Chertkov O."/>
            <person name="Brettin T."/>
            <person name="Detter J.C."/>
            <person name="Han C."/>
            <person name="Larimer F."/>
            <person name="Land M."/>
            <person name="Hauser L."/>
            <person name="Kyrpides N."/>
            <person name="Mikhailova N."/>
            <person name="Coates J.D."/>
        </authorList>
    </citation>
    <scope>NUCLEOTIDE SEQUENCE [LARGE SCALE GENOMIC DNA]</scope>
    <source>
        <strain>TPSY</strain>
    </source>
</reference>
<sequence>MTPITPQEALQRTIEHREIFHDEMLHLMRMIMSGELSPVMTAAITTGLRVKKETIGEITAAAQVMREFSHKVQVHDTKHLVDIVGTGGDGANTFNISTCATFVIAAAGAKVSKHGGRSVSSKSGSADAMEALGVHINLQPAQIAQCIGDVGIGFMFAPNHHPAMKNVAPVRKELGVRTIFNILGPLTNPAGAPNILMGVFHEDLVGIQVRALQRLGAEHALVVYGRDGLDEISLGAGTLVGELKDGAVREYEIHPEDFGLRMAGTRALRVENPTESKAMLMGVLQGDEGPARDIVCLNAGAALYAANVADSLEDGLRRAQQALASGAALAKLQQLVAYTQKLAA</sequence>
<organism>
    <name type="scientific">Acidovorax ebreus (strain TPSY)</name>
    <name type="common">Diaphorobacter sp. (strain TPSY)</name>
    <dbReference type="NCBI Taxonomy" id="535289"/>
    <lineage>
        <taxon>Bacteria</taxon>
        <taxon>Pseudomonadati</taxon>
        <taxon>Pseudomonadota</taxon>
        <taxon>Betaproteobacteria</taxon>
        <taxon>Burkholderiales</taxon>
        <taxon>Comamonadaceae</taxon>
        <taxon>Diaphorobacter</taxon>
    </lineage>
</organism>
<dbReference type="EC" id="2.4.2.18" evidence="1"/>
<dbReference type="EMBL" id="CP001392">
    <property type="protein sequence ID" value="ACM31843.1"/>
    <property type="molecule type" value="Genomic_DNA"/>
</dbReference>
<dbReference type="RefSeq" id="WP_011803832.1">
    <property type="nucleotide sequence ID" value="NC_011992.1"/>
</dbReference>
<dbReference type="SMR" id="B9MBS3"/>
<dbReference type="KEGG" id="dia:Dtpsy_0359"/>
<dbReference type="eggNOG" id="COG0547">
    <property type="taxonomic scope" value="Bacteria"/>
</dbReference>
<dbReference type="HOGENOM" id="CLU_034315_2_1_4"/>
<dbReference type="UniPathway" id="UPA00035">
    <property type="reaction ID" value="UER00041"/>
</dbReference>
<dbReference type="Proteomes" id="UP000000450">
    <property type="component" value="Chromosome"/>
</dbReference>
<dbReference type="GO" id="GO:0005829">
    <property type="term" value="C:cytosol"/>
    <property type="evidence" value="ECO:0007669"/>
    <property type="project" value="TreeGrafter"/>
</dbReference>
<dbReference type="GO" id="GO:0004048">
    <property type="term" value="F:anthranilate phosphoribosyltransferase activity"/>
    <property type="evidence" value="ECO:0007669"/>
    <property type="project" value="UniProtKB-UniRule"/>
</dbReference>
<dbReference type="GO" id="GO:0000287">
    <property type="term" value="F:magnesium ion binding"/>
    <property type="evidence" value="ECO:0007669"/>
    <property type="project" value="UniProtKB-UniRule"/>
</dbReference>
<dbReference type="GO" id="GO:0000162">
    <property type="term" value="P:L-tryptophan biosynthetic process"/>
    <property type="evidence" value="ECO:0007669"/>
    <property type="project" value="UniProtKB-UniRule"/>
</dbReference>
<dbReference type="FunFam" id="1.20.970.10:FF:000006">
    <property type="entry name" value="Anthranilate phosphoribosyltransferase"/>
    <property type="match status" value="1"/>
</dbReference>
<dbReference type="FunFam" id="3.40.1030.10:FF:000002">
    <property type="entry name" value="Anthranilate phosphoribosyltransferase"/>
    <property type="match status" value="1"/>
</dbReference>
<dbReference type="Gene3D" id="3.40.1030.10">
    <property type="entry name" value="Nucleoside phosphorylase/phosphoribosyltransferase catalytic domain"/>
    <property type="match status" value="1"/>
</dbReference>
<dbReference type="Gene3D" id="1.20.970.10">
    <property type="entry name" value="Transferase, Pyrimidine Nucleoside Phosphorylase, Chain C"/>
    <property type="match status" value="1"/>
</dbReference>
<dbReference type="HAMAP" id="MF_00211">
    <property type="entry name" value="TrpD"/>
    <property type="match status" value="1"/>
</dbReference>
<dbReference type="InterPro" id="IPR005940">
    <property type="entry name" value="Anthranilate_Pribosyl_Tfrase"/>
</dbReference>
<dbReference type="InterPro" id="IPR000312">
    <property type="entry name" value="Glycosyl_Trfase_fam3"/>
</dbReference>
<dbReference type="InterPro" id="IPR017459">
    <property type="entry name" value="Glycosyl_Trfase_fam3_N_dom"/>
</dbReference>
<dbReference type="InterPro" id="IPR036320">
    <property type="entry name" value="Glycosyl_Trfase_fam3_N_dom_sf"/>
</dbReference>
<dbReference type="InterPro" id="IPR035902">
    <property type="entry name" value="Nuc_phospho_transferase"/>
</dbReference>
<dbReference type="NCBIfam" id="TIGR01245">
    <property type="entry name" value="trpD"/>
    <property type="match status" value="1"/>
</dbReference>
<dbReference type="PANTHER" id="PTHR43285">
    <property type="entry name" value="ANTHRANILATE PHOSPHORIBOSYLTRANSFERASE"/>
    <property type="match status" value="1"/>
</dbReference>
<dbReference type="PANTHER" id="PTHR43285:SF2">
    <property type="entry name" value="ANTHRANILATE PHOSPHORIBOSYLTRANSFERASE"/>
    <property type="match status" value="1"/>
</dbReference>
<dbReference type="Pfam" id="PF02885">
    <property type="entry name" value="Glycos_trans_3N"/>
    <property type="match status" value="1"/>
</dbReference>
<dbReference type="Pfam" id="PF00591">
    <property type="entry name" value="Glycos_transf_3"/>
    <property type="match status" value="1"/>
</dbReference>
<dbReference type="SUPFAM" id="SSF52418">
    <property type="entry name" value="Nucleoside phosphorylase/phosphoribosyltransferase catalytic domain"/>
    <property type="match status" value="1"/>
</dbReference>
<dbReference type="SUPFAM" id="SSF47648">
    <property type="entry name" value="Nucleoside phosphorylase/phosphoribosyltransferase N-terminal domain"/>
    <property type="match status" value="1"/>
</dbReference>
<comment type="function">
    <text evidence="1">Catalyzes the transfer of the phosphoribosyl group of 5-phosphorylribose-1-pyrophosphate (PRPP) to anthranilate to yield N-(5'-phosphoribosyl)-anthranilate (PRA).</text>
</comment>
<comment type="catalytic activity">
    <reaction evidence="1">
        <text>N-(5-phospho-beta-D-ribosyl)anthranilate + diphosphate = 5-phospho-alpha-D-ribose 1-diphosphate + anthranilate</text>
        <dbReference type="Rhea" id="RHEA:11768"/>
        <dbReference type="ChEBI" id="CHEBI:16567"/>
        <dbReference type="ChEBI" id="CHEBI:18277"/>
        <dbReference type="ChEBI" id="CHEBI:33019"/>
        <dbReference type="ChEBI" id="CHEBI:58017"/>
        <dbReference type="EC" id="2.4.2.18"/>
    </reaction>
</comment>
<comment type="cofactor">
    <cofactor evidence="1">
        <name>Mg(2+)</name>
        <dbReference type="ChEBI" id="CHEBI:18420"/>
    </cofactor>
    <text evidence="1">Binds 2 magnesium ions per monomer.</text>
</comment>
<comment type="pathway">
    <text evidence="1">Amino-acid biosynthesis; L-tryptophan biosynthesis; L-tryptophan from chorismate: step 2/5.</text>
</comment>
<comment type="subunit">
    <text evidence="1">Homodimer.</text>
</comment>
<comment type="similarity">
    <text evidence="1">Belongs to the anthranilate phosphoribosyltransferase family.</text>
</comment>
<accession>B9MBS3</accession>
<proteinExistence type="inferred from homology"/>
<evidence type="ECO:0000255" key="1">
    <source>
        <dbReference type="HAMAP-Rule" id="MF_00211"/>
    </source>
</evidence>
<feature type="chain" id="PRO_1000198822" description="Anthranilate phosphoribosyltransferase">
    <location>
        <begin position="1"/>
        <end position="344"/>
    </location>
</feature>
<feature type="binding site" evidence="1">
    <location>
        <position position="85"/>
    </location>
    <ligand>
        <name>5-phospho-alpha-D-ribose 1-diphosphate</name>
        <dbReference type="ChEBI" id="CHEBI:58017"/>
    </ligand>
</feature>
<feature type="binding site" evidence="1">
    <location>
        <position position="85"/>
    </location>
    <ligand>
        <name>anthranilate</name>
        <dbReference type="ChEBI" id="CHEBI:16567"/>
        <label>1</label>
    </ligand>
</feature>
<feature type="binding site" evidence="1">
    <location>
        <begin position="88"/>
        <end position="89"/>
    </location>
    <ligand>
        <name>5-phospho-alpha-D-ribose 1-diphosphate</name>
        <dbReference type="ChEBI" id="CHEBI:58017"/>
    </ligand>
</feature>
<feature type="binding site" evidence="1">
    <location>
        <position position="93"/>
    </location>
    <ligand>
        <name>5-phospho-alpha-D-ribose 1-diphosphate</name>
        <dbReference type="ChEBI" id="CHEBI:58017"/>
    </ligand>
</feature>
<feature type="binding site" evidence="1">
    <location>
        <begin position="95"/>
        <end position="98"/>
    </location>
    <ligand>
        <name>5-phospho-alpha-D-ribose 1-diphosphate</name>
        <dbReference type="ChEBI" id="CHEBI:58017"/>
    </ligand>
</feature>
<feature type="binding site" evidence="1">
    <location>
        <position position="97"/>
    </location>
    <ligand>
        <name>Mg(2+)</name>
        <dbReference type="ChEBI" id="CHEBI:18420"/>
        <label>1</label>
    </ligand>
</feature>
<feature type="binding site" evidence="1">
    <location>
        <begin position="113"/>
        <end position="121"/>
    </location>
    <ligand>
        <name>5-phospho-alpha-D-ribose 1-diphosphate</name>
        <dbReference type="ChEBI" id="CHEBI:58017"/>
    </ligand>
</feature>
<feature type="binding site" evidence="1">
    <location>
        <position position="125"/>
    </location>
    <ligand>
        <name>5-phospho-alpha-D-ribose 1-diphosphate</name>
        <dbReference type="ChEBI" id="CHEBI:58017"/>
    </ligand>
</feature>
<feature type="binding site" evidence="1">
    <location>
        <position position="171"/>
    </location>
    <ligand>
        <name>anthranilate</name>
        <dbReference type="ChEBI" id="CHEBI:16567"/>
        <label>2</label>
    </ligand>
</feature>
<feature type="binding site" evidence="1">
    <location>
        <position position="230"/>
    </location>
    <ligand>
        <name>Mg(2+)</name>
        <dbReference type="ChEBI" id="CHEBI:18420"/>
        <label>2</label>
    </ligand>
</feature>
<feature type="binding site" evidence="1">
    <location>
        <position position="231"/>
    </location>
    <ligand>
        <name>Mg(2+)</name>
        <dbReference type="ChEBI" id="CHEBI:18420"/>
        <label>1</label>
    </ligand>
</feature>
<feature type="binding site" evidence="1">
    <location>
        <position position="231"/>
    </location>
    <ligand>
        <name>Mg(2+)</name>
        <dbReference type="ChEBI" id="CHEBI:18420"/>
        <label>2</label>
    </ligand>
</feature>
<gene>
    <name evidence="1" type="primary">trpD</name>
    <name type="ordered locus">Dtpsy_0359</name>
</gene>
<keyword id="KW-0028">Amino-acid biosynthesis</keyword>
<keyword id="KW-0057">Aromatic amino acid biosynthesis</keyword>
<keyword id="KW-0328">Glycosyltransferase</keyword>
<keyword id="KW-0460">Magnesium</keyword>
<keyword id="KW-0479">Metal-binding</keyword>
<keyword id="KW-1185">Reference proteome</keyword>
<keyword id="KW-0808">Transferase</keyword>
<keyword id="KW-0822">Tryptophan biosynthesis</keyword>